<protein>
    <recommendedName>
        <fullName>Glutathione S-transferase Mu 3</fullName>
        <ecNumber>2.5.1.18</ecNumber>
    </recommendedName>
    <alternativeName>
        <fullName>GST class-mu 3</fullName>
    </alternativeName>
    <alternativeName>
        <fullName>Glutathione S-transferase GT9.3</fullName>
    </alternativeName>
</protein>
<dbReference type="EC" id="2.5.1.18"/>
<dbReference type="EMBL" id="BC044927">
    <property type="protein sequence ID" value="AAH44927.1"/>
    <property type="molecule type" value="mRNA"/>
</dbReference>
<dbReference type="EMBL" id="J03953">
    <property type="protein sequence ID" value="AAA37748.1"/>
    <property type="status" value="ALT_INIT"/>
    <property type="molecule type" value="mRNA"/>
</dbReference>
<dbReference type="CCDS" id="CCDS17744.1"/>
<dbReference type="PIR" id="B28946">
    <property type="entry name" value="B28946"/>
</dbReference>
<dbReference type="PIR" id="E37520">
    <property type="entry name" value="E37520"/>
</dbReference>
<dbReference type="RefSeq" id="NP_034489.1">
    <property type="nucleotide sequence ID" value="NM_010359.3"/>
</dbReference>
<dbReference type="SMR" id="P19639"/>
<dbReference type="BioGRID" id="200096">
    <property type="interactions" value="2"/>
</dbReference>
<dbReference type="FunCoup" id="P19639">
    <property type="interactions" value="191"/>
</dbReference>
<dbReference type="IntAct" id="P19639">
    <property type="interactions" value="1"/>
</dbReference>
<dbReference type="STRING" id="10090.ENSMUSP00000004136"/>
<dbReference type="iPTMnet" id="P19639"/>
<dbReference type="PhosphoSitePlus" id="P19639"/>
<dbReference type="SwissPalm" id="P19639"/>
<dbReference type="jPOST" id="P19639"/>
<dbReference type="PaxDb" id="10090-ENSMUSP00000004136"/>
<dbReference type="PeptideAtlas" id="P19639"/>
<dbReference type="ProteomicsDB" id="271180"/>
<dbReference type="DNASU" id="14864"/>
<dbReference type="Ensembl" id="ENSMUST00000004136.10">
    <property type="protein sequence ID" value="ENSMUSP00000004136.9"/>
    <property type="gene ID" value="ENSMUSG00000004038.10"/>
</dbReference>
<dbReference type="GeneID" id="14864"/>
<dbReference type="KEGG" id="mmu:14864"/>
<dbReference type="UCSC" id="uc008qxv.2">
    <property type="organism name" value="mouse"/>
</dbReference>
<dbReference type="AGR" id="MGI:106026"/>
<dbReference type="CTD" id="2947"/>
<dbReference type="MGI" id="MGI:106026">
    <property type="gene designation" value="Gstm3"/>
</dbReference>
<dbReference type="VEuPathDB" id="HostDB:ENSMUSG00000004038"/>
<dbReference type="eggNOG" id="KOG1695">
    <property type="taxonomic scope" value="Eukaryota"/>
</dbReference>
<dbReference type="GeneTree" id="ENSGT00940000160258"/>
<dbReference type="HOGENOM" id="CLU_039475_2_0_1"/>
<dbReference type="InParanoid" id="P19639"/>
<dbReference type="OMA" id="HLRERRW"/>
<dbReference type="OrthoDB" id="4951845at2759"/>
<dbReference type="PhylomeDB" id="P19639"/>
<dbReference type="TreeFam" id="TF353040"/>
<dbReference type="Reactome" id="R-MMU-156590">
    <property type="pathway name" value="Glutathione conjugation"/>
</dbReference>
<dbReference type="BioGRID-ORCS" id="14864">
    <property type="hits" value="2 hits in 76 CRISPR screens"/>
</dbReference>
<dbReference type="ChiTaRS" id="Gstm3">
    <property type="organism name" value="mouse"/>
</dbReference>
<dbReference type="PRO" id="PR:P19639"/>
<dbReference type="Proteomes" id="UP000000589">
    <property type="component" value="Chromosome 3"/>
</dbReference>
<dbReference type="RNAct" id="P19639">
    <property type="molecule type" value="protein"/>
</dbReference>
<dbReference type="Bgee" id="ENSMUSG00000004038">
    <property type="expression patterns" value="Expressed in duodenum and 96 other cell types or tissues"/>
</dbReference>
<dbReference type="GO" id="GO:0005737">
    <property type="term" value="C:cytoplasm"/>
    <property type="evidence" value="ECO:0007669"/>
    <property type="project" value="UniProtKB-SubCell"/>
</dbReference>
<dbReference type="GO" id="GO:0004364">
    <property type="term" value="F:glutathione transferase activity"/>
    <property type="evidence" value="ECO:0000266"/>
    <property type="project" value="MGI"/>
</dbReference>
<dbReference type="GO" id="GO:0042803">
    <property type="term" value="F:protein homodimerization activity"/>
    <property type="evidence" value="ECO:0000266"/>
    <property type="project" value="MGI"/>
</dbReference>
<dbReference type="GO" id="GO:0071466">
    <property type="term" value="P:cellular response to xenobiotic stimulus"/>
    <property type="evidence" value="ECO:0000314"/>
    <property type="project" value="MGI"/>
</dbReference>
<dbReference type="GO" id="GO:0009617">
    <property type="term" value="P:response to bacterium"/>
    <property type="evidence" value="ECO:0000270"/>
    <property type="project" value="MGI"/>
</dbReference>
<dbReference type="CDD" id="cd03209">
    <property type="entry name" value="GST_C_Mu"/>
    <property type="match status" value="1"/>
</dbReference>
<dbReference type="CDD" id="cd03075">
    <property type="entry name" value="GST_N_Mu"/>
    <property type="match status" value="1"/>
</dbReference>
<dbReference type="FunFam" id="1.20.1050.10:FF:000083">
    <property type="entry name" value="Glutathione S-transferase Mu 1"/>
    <property type="match status" value="1"/>
</dbReference>
<dbReference type="FunFam" id="3.40.30.10:FF:000603">
    <property type="entry name" value="Glutathione S-transferase Mu 1"/>
    <property type="match status" value="1"/>
</dbReference>
<dbReference type="Gene3D" id="1.20.1050.10">
    <property type="match status" value="1"/>
</dbReference>
<dbReference type="Gene3D" id="3.40.30.10">
    <property type="entry name" value="Glutaredoxin"/>
    <property type="match status" value="1"/>
</dbReference>
<dbReference type="InterPro" id="IPR010987">
    <property type="entry name" value="Glutathione-S-Trfase_C-like"/>
</dbReference>
<dbReference type="InterPro" id="IPR036282">
    <property type="entry name" value="Glutathione-S-Trfase_C_sf"/>
</dbReference>
<dbReference type="InterPro" id="IPR004045">
    <property type="entry name" value="Glutathione_S-Trfase_N"/>
</dbReference>
<dbReference type="InterPro" id="IPR004046">
    <property type="entry name" value="GST_C"/>
</dbReference>
<dbReference type="InterPro" id="IPR003081">
    <property type="entry name" value="GST_mu"/>
</dbReference>
<dbReference type="InterPro" id="IPR050213">
    <property type="entry name" value="GST_superfamily"/>
</dbReference>
<dbReference type="InterPro" id="IPR036249">
    <property type="entry name" value="Thioredoxin-like_sf"/>
</dbReference>
<dbReference type="PANTHER" id="PTHR11571">
    <property type="entry name" value="GLUTATHIONE S-TRANSFERASE"/>
    <property type="match status" value="1"/>
</dbReference>
<dbReference type="PANTHER" id="PTHR11571:SF126">
    <property type="entry name" value="GLUTATHIONE S-TRANSFERASE MU 1-RELATED"/>
    <property type="match status" value="1"/>
</dbReference>
<dbReference type="Pfam" id="PF00043">
    <property type="entry name" value="GST_C"/>
    <property type="match status" value="1"/>
</dbReference>
<dbReference type="Pfam" id="PF02798">
    <property type="entry name" value="GST_N"/>
    <property type="match status" value="1"/>
</dbReference>
<dbReference type="PRINTS" id="PR01267">
    <property type="entry name" value="GSTRNSFRASEM"/>
</dbReference>
<dbReference type="SFLD" id="SFLDG01205">
    <property type="entry name" value="AMPS.1"/>
    <property type="match status" value="1"/>
</dbReference>
<dbReference type="SFLD" id="SFLDG00363">
    <property type="entry name" value="AMPS_(cytGST):_Alpha-__Mu-__Pi"/>
    <property type="match status" value="1"/>
</dbReference>
<dbReference type="SUPFAM" id="SSF47616">
    <property type="entry name" value="GST C-terminal domain-like"/>
    <property type="match status" value="1"/>
</dbReference>
<dbReference type="SUPFAM" id="SSF52833">
    <property type="entry name" value="Thioredoxin-like"/>
    <property type="match status" value="1"/>
</dbReference>
<dbReference type="PROSITE" id="PS50405">
    <property type="entry name" value="GST_CTER"/>
    <property type="match status" value="1"/>
</dbReference>
<dbReference type="PROSITE" id="PS50404">
    <property type="entry name" value="GST_NTER"/>
    <property type="match status" value="1"/>
</dbReference>
<keyword id="KW-0963">Cytoplasm</keyword>
<keyword id="KW-0903">Direct protein sequencing</keyword>
<keyword id="KW-1017">Isopeptide bond</keyword>
<keyword id="KW-1185">Reference proteome</keyword>
<keyword id="KW-0808">Transferase</keyword>
<keyword id="KW-0832">Ubl conjugation</keyword>
<accession>P19639</accession>
<proteinExistence type="evidence at protein level"/>
<comment type="function">
    <text>Conjugation of reduced glutathione to a wide number of exogenous and endogenous hydrophobic electrophiles.</text>
</comment>
<comment type="catalytic activity">
    <reaction>
        <text>RX + glutathione = an S-substituted glutathione + a halide anion + H(+)</text>
        <dbReference type="Rhea" id="RHEA:16437"/>
        <dbReference type="ChEBI" id="CHEBI:15378"/>
        <dbReference type="ChEBI" id="CHEBI:16042"/>
        <dbReference type="ChEBI" id="CHEBI:17792"/>
        <dbReference type="ChEBI" id="CHEBI:57925"/>
        <dbReference type="ChEBI" id="CHEBI:90779"/>
        <dbReference type="EC" id="2.5.1.18"/>
    </reaction>
</comment>
<comment type="subunit">
    <text>Homodimer.</text>
</comment>
<comment type="subcellular location">
    <subcellularLocation>
        <location>Cytoplasm</location>
    </subcellularLocation>
</comment>
<comment type="similarity">
    <text evidence="4">Belongs to the GST superfamily. Mu family.</text>
</comment>
<comment type="sequence caution" evidence="4">
    <conflict type="erroneous initiation">
        <sequence resource="EMBL-CDS" id="AAA37748"/>
    </conflict>
</comment>
<sequence length="218" mass="25702">MPMTLGYWNTRGLTHSIRLLLEYTDSSYEEKRYVMGDAPNFDRSQWLSEKFNLGLDFPNLPYLIDGSHKVTQSNAILRYLGRKHNLCGETEEERIRVDTLENQVMDTRIQLMIVCCSPDFEKQKPEFLKAIPEKMKLYSEFLGKRPWFAGDKVTYVDFLAYDILDQYRMFEPKCLDAFPNLRDFLARFEGLKKISAYMKSSRFLPRPVFTKIAQWGTD</sequence>
<reference key="1">
    <citation type="journal article" date="1988" name="J. Biol. Chem.">
        <title>Tissue-specific induction of murine glutathione transferase mRNAs by butylated hydroxyanisole.</title>
        <authorList>
            <person name="Pearson W.R."/>
            <person name="Reinhart J."/>
            <person name="Sisk S.C."/>
            <person name="Anderson K.S."/>
            <person name="Adler P.N."/>
        </authorList>
    </citation>
    <scope>NUCLEOTIDE SEQUENCE [MRNA]</scope>
</reference>
<reference key="2">
    <citation type="journal article" date="2004" name="Genome Res.">
        <title>The status, quality, and expansion of the NIH full-length cDNA project: the Mammalian Gene Collection (MGC).</title>
        <authorList>
            <consortium name="The MGC Project Team"/>
        </authorList>
    </citation>
    <scope>NUCLEOTIDE SEQUENCE [LARGE SCALE MRNA]</scope>
    <source>
        <strain>FVB/N</strain>
        <tissue>Liver</tissue>
    </source>
</reference>
<reference key="3">
    <citation type="journal article" date="1983" name="J. Biol. Chem.">
        <title>Increased synthesis of glutathione S-transferases in response to anticarcinogenic antioxidants. Cloning and measurement of messenger RNA.</title>
        <authorList>
            <person name="Pearson W.R."/>
            <person name="Windle J.J."/>
            <person name="Morrow J.F."/>
            <person name="Benson A.M."/>
            <person name="Talalay P."/>
        </authorList>
    </citation>
    <scope>NUCLEOTIDE SEQUENCE [MRNA] OF 1-41</scope>
</reference>
<reference key="4">
    <citation type="journal article" date="1985" name="Proc. Natl. Acad. Sci. U.S.A.">
        <title>Identification of three classes of cytosolic glutathione transferase common to several mammalian species: correlation between structural data and enzymatic properties.</title>
        <authorList>
            <person name="Mannervik B."/>
            <person name="Alin P."/>
            <person name="Guthenberg C."/>
            <person name="Jensson H."/>
            <person name="Tahir M.K."/>
            <person name="Warholm M."/>
            <person name="Joernvall H."/>
        </authorList>
    </citation>
    <scope>PROTEIN SEQUENCE OF 2-26</scope>
</reference>
<reference key="5">
    <citation type="journal article" date="2010" name="Cell">
        <title>A tissue-specific atlas of mouse protein phosphorylation and expression.</title>
        <authorList>
            <person name="Huttlin E.L."/>
            <person name="Jedrychowski M.P."/>
            <person name="Elias J.E."/>
            <person name="Goswami T."/>
            <person name="Rad R."/>
            <person name="Beausoleil S.A."/>
            <person name="Villen J."/>
            <person name="Haas W."/>
            <person name="Sowa M.E."/>
            <person name="Gygi S.P."/>
        </authorList>
    </citation>
    <scope>IDENTIFICATION BY MASS SPECTROMETRY [LARGE SCALE ANALYSIS]</scope>
    <source>
        <tissue>Liver</tissue>
    </source>
</reference>
<feature type="initiator methionine" description="Removed" evidence="3">
    <location>
        <position position="1"/>
    </location>
</feature>
<feature type="chain" id="PRO_0000185828" description="Glutathione S-transferase Mu 3">
    <location>
        <begin position="2"/>
        <end position="218"/>
    </location>
</feature>
<feature type="domain" description="GST N-terminal">
    <location>
        <begin position="2"/>
        <end position="88"/>
    </location>
</feature>
<feature type="domain" description="GST C-terminal">
    <location>
        <begin position="90"/>
        <end position="208"/>
    </location>
</feature>
<feature type="binding site" evidence="1">
    <location>
        <begin position="7"/>
        <end position="8"/>
    </location>
    <ligand>
        <name>glutathione</name>
        <dbReference type="ChEBI" id="CHEBI:57925"/>
    </ligand>
</feature>
<feature type="binding site" evidence="1">
    <location>
        <begin position="46"/>
        <end position="50"/>
    </location>
    <ligand>
        <name>glutathione</name>
        <dbReference type="ChEBI" id="CHEBI:57925"/>
    </ligand>
</feature>
<feature type="binding site" evidence="1">
    <location>
        <begin position="59"/>
        <end position="60"/>
    </location>
    <ligand>
        <name>glutathione</name>
        <dbReference type="ChEBI" id="CHEBI:57925"/>
    </ligand>
</feature>
<feature type="binding site" evidence="1">
    <location>
        <begin position="72"/>
        <end position="73"/>
    </location>
    <ligand>
        <name>glutathione</name>
        <dbReference type="ChEBI" id="CHEBI:57925"/>
    </ligand>
</feature>
<feature type="cross-link" description="Glycyl lysine isopeptide (Lys-Gly) (interchain with G-Cter in SUMO2)" evidence="2">
    <location>
        <position position="50"/>
    </location>
</feature>
<feature type="cross-link" description="Glycyl lysine isopeptide (Lys-Gly) (interchain with G-Cter in SUMO2)" evidence="2">
    <location>
        <position position="69"/>
    </location>
</feature>
<gene>
    <name type="primary">Gstm3</name>
</gene>
<evidence type="ECO:0000250" key="1">
    <source>
        <dbReference type="UniProtKB" id="P08515"/>
    </source>
</evidence>
<evidence type="ECO:0000250" key="2">
    <source>
        <dbReference type="UniProtKB" id="P21266"/>
    </source>
</evidence>
<evidence type="ECO:0000269" key="3">
    <source>
    </source>
</evidence>
<evidence type="ECO:0000305" key="4"/>
<name>GSTM3_MOUSE</name>
<organism>
    <name type="scientific">Mus musculus</name>
    <name type="common">Mouse</name>
    <dbReference type="NCBI Taxonomy" id="10090"/>
    <lineage>
        <taxon>Eukaryota</taxon>
        <taxon>Metazoa</taxon>
        <taxon>Chordata</taxon>
        <taxon>Craniata</taxon>
        <taxon>Vertebrata</taxon>
        <taxon>Euteleostomi</taxon>
        <taxon>Mammalia</taxon>
        <taxon>Eutheria</taxon>
        <taxon>Euarchontoglires</taxon>
        <taxon>Glires</taxon>
        <taxon>Rodentia</taxon>
        <taxon>Myomorpha</taxon>
        <taxon>Muroidea</taxon>
        <taxon>Muridae</taxon>
        <taxon>Murinae</taxon>
        <taxon>Mus</taxon>
        <taxon>Mus</taxon>
    </lineage>
</organism>